<dbReference type="EMBL" id="CU329671">
    <property type="protein sequence ID" value="CAB58973.2"/>
    <property type="molecule type" value="Genomic_DNA"/>
</dbReference>
<dbReference type="PIR" id="T11685">
    <property type="entry name" value="T11685"/>
</dbReference>
<dbReference type="RefSeq" id="NP_596000.2">
    <property type="nucleotide sequence ID" value="NM_001021908.2"/>
</dbReference>
<dbReference type="SMR" id="Q9USW9"/>
<dbReference type="BioGRID" id="277306">
    <property type="interactions" value="222"/>
</dbReference>
<dbReference type="FunCoup" id="Q9USW9">
    <property type="interactions" value="24"/>
</dbReference>
<dbReference type="IntAct" id="Q9USW9">
    <property type="interactions" value="2"/>
</dbReference>
<dbReference type="MINT" id="Q9USW9"/>
<dbReference type="STRING" id="284812.Q9USW9"/>
<dbReference type="iPTMnet" id="Q9USW9"/>
<dbReference type="SwissPalm" id="Q9USW9"/>
<dbReference type="PaxDb" id="4896-SPBC1921.07c.1"/>
<dbReference type="EnsemblFungi" id="SPBC1921.07c.1">
    <property type="protein sequence ID" value="SPBC1921.07c.1:pep"/>
    <property type="gene ID" value="SPBC1921.07c"/>
</dbReference>
<dbReference type="GeneID" id="2540787"/>
<dbReference type="KEGG" id="spo:2540787"/>
<dbReference type="PomBase" id="SPBC1921.07c">
    <property type="gene designation" value="sgf29"/>
</dbReference>
<dbReference type="VEuPathDB" id="FungiDB:SPBC1921.07c"/>
<dbReference type="eggNOG" id="KOG3038">
    <property type="taxonomic scope" value="Eukaryota"/>
</dbReference>
<dbReference type="HOGENOM" id="CLU_023535_2_0_1"/>
<dbReference type="InParanoid" id="Q9USW9"/>
<dbReference type="OMA" id="QKECHET"/>
<dbReference type="PhylomeDB" id="Q9USW9"/>
<dbReference type="PRO" id="PR:Q9USW9"/>
<dbReference type="Proteomes" id="UP000002485">
    <property type="component" value="Chromosome II"/>
</dbReference>
<dbReference type="GO" id="GO:0005829">
    <property type="term" value="C:cytosol"/>
    <property type="evidence" value="ECO:0007005"/>
    <property type="project" value="PomBase"/>
</dbReference>
<dbReference type="GO" id="GO:0005634">
    <property type="term" value="C:nucleus"/>
    <property type="evidence" value="ECO:0007005"/>
    <property type="project" value="PomBase"/>
</dbReference>
<dbReference type="GO" id="GO:0000124">
    <property type="term" value="C:SAGA complex"/>
    <property type="evidence" value="ECO:0000314"/>
    <property type="project" value="UniProtKB"/>
</dbReference>
<dbReference type="GO" id="GO:0035064">
    <property type="term" value="F:methylated histone binding"/>
    <property type="evidence" value="ECO:0000314"/>
    <property type="project" value="PomBase"/>
</dbReference>
<dbReference type="GO" id="GO:0045893">
    <property type="term" value="P:positive regulation of DNA-templated transcription"/>
    <property type="evidence" value="ECO:0007669"/>
    <property type="project" value="GOC"/>
</dbReference>
<dbReference type="GO" id="GO:0006357">
    <property type="term" value="P:regulation of transcription by RNA polymerase II"/>
    <property type="evidence" value="ECO:0000269"/>
    <property type="project" value="PomBase"/>
</dbReference>
<dbReference type="GO" id="GO:0045815">
    <property type="term" value="P:transcription initiation-coupled chromatin remodeling"/>
    <property type="evidence" value="ECO:0000305"/>
    <property type="project" value="PomBase"/>
</dbReference>
<dbReference type="CDD" id="cd20393">
    <property type="entry name" value="Tudor_SGF29_rpt1"/>
    <property type="match status" value="1"/>
</dbReference>
<dbReference type="CDD" id="cd20394">
    <property type="entry name" value="Tudor_SGF29_rpt2"/>
    <property type="match status" value="1"/>
</dbReference>
<dbReference type="Gene3D" id="2.30.30.140">
    <property type="match status" value="1"/>
</dbReference>
<dbReference type="InterPro" id="IPR037802">
    <property type="entry name" value="SGF29"/>
</dbReference>
<dbReference type="InterPro" id="IPR010750">
    <property type="entry name" value="SGF29_tudor-like_dom"/>
</dbReference>
<dbReference type="InterPro" id="IPR047288">
    <property type="entry name" value="Tudor_SGF29_rpt1"/>
</dbReference>
<dbReference type="InterPro" id="IPR047287">
    <property type="entry name" value="Tudor_SGF29_rpt2"/>
</dbReference>
<dbReference type="PANTHER" id="PTHR21539">
    <property type="entry name" value="SAGA-ASSOCIATED FACTOR 29"/>
    <property type="match status" value="1"/>
</dbReference>
<dbReference type="PANTHER" id="PTHR21539:SF0">
    <property type="entry name" value="SAGA-ASSOCIATED FACTOR 29"/>
    <property type="match status" value="1"/>
</dbReference>
<dbReference type="Pfam" id="PF07039">
    <property type="entry name" value="SGF29_Tudor"/>
    <property type="match status" value="1"/>
</dbReference>
<dbReference type="PROSITE" id="PS51518">
    <property type="entry name" value="SGF29_C"/>
    <property type="match status" value="1"/>
</dbReference>
<reference key="1">
    <citation type="journal article" date="2002" name="Nature">
        <title>The genome sequence of Schizosaccharomyces pombe.</title>
        <authorList>
            <person name="Wood V."/>
            <person name="Gwilliam R."/>
            <person name="Rajandream M.A."/>
            <person name="Lyne M.H."/>
            <person name="Lyne R."/>
            <person name="Stewart A."/>
            <person name="Sgouros J.G."/>
            <person name="Peat N."/>
            <person name="Hayles J."/>
            <person name="Baker S.G."/>
            <person name="Basham D."/>
            <person name="Bowman S."/>
            <person name="Brooks K."/>
            <person name="Brown D."/>
            <person name="Brown S."/>
            <person name="Chillingworth T."/>
            <person name="Churcher C.M."/>
            <person name="Collins M."/>
            <person name="Connor R."/>
            <person name="Cronin A."/>
            <person name="Davis P."/>
            <person name="Feltwell T."/>
            <person name="Fraser A."/>
            <person name="Gentles S."/>
            <person name="Goble A."/>
            <person name="Hamlin N."/>
            <person name="Harris D.E."/>
            <person name="Hidalgo J."/>
            <person name="Hodgson G."/>
            <person name="Holroyd S."/>
            <person name="Hornsby T."/>
            <person name="Howarth S."/>
            <person name="Huckle E.J."/>
            <person name="Hunt S."/>
            <person name="Jagels K."/>
            <person name="James K.D."/>
            <person name="Jones L."/>
            <person name="Jones M."/>
            <person name="Leather S."/>
            <person name="McDonald S."/>
            <person name="McLean J."/>
            <person name="Mooney P."/>
            <person name="Moule S."/>
            <person name="Mungall K.L."/>
            <person name="Murphy L.D."/>
            <person name="Niblett D."/>
            <person name="Odell C."/>
            <person name="Oliver K."/>
            <person name="O'Neil S."/>
            <person name="Pearson D."/>
            <person name="Quail M.A."/>
            <person name="Rabbinowitsch E."/>
            <person name="Rutherford K.M."/>
            <person name="Rutter S."/>
            <person name="Saunders D."/>
            <person name="Seeger K."/>
            <person name="Sharp S."/>
            <person name="Skelton J."/>
            <person name="Simmonds M.N."/>
            <person name="Squares R."/>
            <person name="Squares S."/>
            <person name="Stevens K."/>
            <person name="Taylor K."/>
            <person name="Taylor R.G."/>
            <person name="Tivey A."/>
            <person name="Walsh S.V."/>
            <person name="Warren T."/>
            <person name="Whitehead S."/>
            <person name="Woodward J.R."/>
            <person name="Volckaert G."/>
            <person name="Aert R."/>
            <person name="Robben J."/>
            <person name="Grymonprez B."/>
            <person name="Weltjens I."/>
            <person name="Vanstreels E."/>
            <person name="Rieger M."/>
            <person name="Schaefer M."/>
            <person name="Mueller-Auer S."/>
            <person name="Gabel C."/>
            <person name="Fuchs M."/>
            <person name="Duesterhoeft A."/>
            <person name="Fritzc C."/>
            <person name="Holzer E."/>
            <person name="Moestl D."/>
            <person name="Hilbert H."/>
            <person name="Borzym K."/>
            <person name="Langer I."/>
            <person name="Beck A."/>
            <person name="Lehrach H."/>
            <person name="Reinhardt R."/>
            <person name="Pohl T.M."/>
            <person name="Eger P."/>
            <person name="Zimmermann W."/>
            <person name="Wedler H."/>
            <person name="Wambutt R."/>
            <person name="Purnelle B."/>
            <person name="Goffeau A."/>
            <person name="Cadieu E."/>
            <person name="Dreano S."/>
            <person name="Gloux S."/>
            <person name="Lelaure V."/>
            <person name="Mottier S."/>
            <person name="Galibert F."/>
            <person name="Aves S.J."/>
            <person name="Xiang Z."/>
            <person name="Hunt C."/>
            <person name="Moore K."/>
            <person name="Hurst S.M."/>
            <person name="Lucas M."/>
            <person name="Rochet M."/>
            <person name="Gaillardin C."/>
            <person name="Tallada V.A."/>
            <person name="Garzon A."/>
            <person name="Thode G."/>
            <person name="Daga R.R."/>
            <person name="Cruzado L."/>
            <person name="Jimenez J."/>
            <person name="Sanchez M."/>
            <person name="del Rey F."/>
            <person name="Benito J."/>
            <person name="Dominguez A."/>
            <person name="Revuelta J.L."/>
            <person name="Moreno S."/>
            <person name="Armstrong J."/>
            <person name="Forsburg S.L."/>
            <person name="Cerutti L."/>
            <person name="Lowe T."/>
            <person name="McCombie W.R."/>
            <person name="Paulsen I."/>
            <person name="Potashkin J."/>
            <person name="Shpakovski G.V."/>
            <person name="Ussery D."/>
            <person name="Barrell B.G."/>
            <person name="Nurse P."/>
        </authorList>
    </citation>
    <scope>NUCLEOTIDE SEQUENCE [LARGE SCALE GENOMIC DNA]</scope>
    <source>
        <strain>972 / ATCC 24843</strain>
    </source>
</reference>
<reference key="2">
    <citation type="journal article" date="2006" name="Nat. Biotechnol.">
        <title>ORFeome cloning and global analysis of protein localization in the fission yeast Schizosaccharomyces pombe.</title>
        <authorList>
            <person name="Matsuyama A."/>
            <person name="Arai R."/>
            <person name="Yashiroda Y."/>
            <person name="Shirai A."/>
            <person name="Kamata A."/>
            <person name="Sekido S."/>
            <person name="Kobayashi Y."/>
            <person name="Hashimoto A."/>
            <person name="Hamamoto M."/>
            <person name="Hiraoka Y."/>
            <person name="Horinouchi S."/>
            <person name="Yoshida M."/>
        </authorList>
    </citation>
    <scope>SUBCELLULAR LOCATION [LARGE SCALE ANALYSIS]</scope>
</reference>
<reference key="3">
    <citation type="journal article" date="2008" name="Genes Dev.">
        <title>The S. pombe SAGA complex controls the switch from proliferation to sexual differentiation through the opposing roles of its subunits Gcn5 and Spt8.</title>
        <authorList>
            <person name="Helmlinger D."/>
            <person name="Marguerat S."/>
            <person name="Villen J."/>
            <person name="Gygi S.P."/>
            <person name="Bahler J."/>
            <person name="Winston F."/>
        </authorList>
    </citation>
    <scope>IDENTIFICATION IN THE SAGA COMPLEX</scope>
    <scope>IDENTIFICATION BY MASS SPECTROMETRY</scope>
</reference>
<reference key="4">
    <citation type="journal article" date="2011" name="EMBO J.">
        <title>Tra1 has specific regulatory roles, rather than global functions, within the SAGA co-activator complex.</title>
        <authorList>
            <person name="Helmlinger D."/>
            <person name="Marguerat S."/>
            <person name="Villen J."/>
            <person name="Swaney D.L."/>
            <person name="Gygi S.P."/>
            <person name="Bahler J."/>
            <person name="Winston F."/>
        </authorList>
    </citation>
    <scope>FUNCTION</scope>
</reference>
<reference key="5">
    <citation type="journal article" date="2015" name="Proc. Natl. Acad. Sci. U.S.A.">
        <title>Nucleosome competition reveals processive acetylation by the SAGA HAT module.</title>
        <authorList>
            <person name="Ringel A.E."/>
            <person name="Cieniewicz A.M."/>
            <person name="Taverna S.D."/>
            <person name="Wolberger C."/>
        </authorList>
    </citation>
    <scope>FUNCTION</scope>
    <scope>MUTAGENESIS OF 202-THR--TYR-205</scope>
</reference>
<proteinExistence type="evidence at protein level"/>
<accession>Q9USW9</accession>
<accession>O74353</accession>
<comment type="function">
    <text evidence="1 5 6">Chromatin reader component of the transcription coactivator SAGA complex. SAGA acts as a general cofactor required for essentially all RNA polymerase II transcription. At the promoters, SAGA is required for transcription pre-initiation complex (PIC) recruitment. It influences RNA polymerase II transcriptional activity through different activities such as TBP interaction (via core/TAF module) and promoter selectivity, interaction with transcription activators (via Tra1/SPT module), and chromatin modification through histone acetylation (via HAT module) and deubiquitination (via DUB module). SAGA preferentially acetylates histones H3 (to form H3K9ac, H3K14ac, H3K18ac and H3K23ac) and H2B and deubiquitinates histone H2B. SAGA interacts with DNA via upstream activating sequences (UASs) (By similarity). Sgf29 specifically recognizes and binds methylated 'Lys-4' of histone H3 (H3K4me), with a preference for trimethylated form (H3K4me3). Required to facilitate crosstalk between gcn5 acetyltransferase activity and H3K4me3 recognition (PubMed:21642955, PubMed:26401015).</text>
</comment>
<comment type="subunit">
    <text evidence="1 4">Component of the 1.8 MDa SAGA (Spt-Ada-Gcn5 acetyltransferase) complex, which is composed of 19 subunits tra1, spt7, taf5, ngg1/ada3, sgf73, spt20, spt8, taf12, taf6, hfi1/ada1, ubp8, gcn5, ada2, spt3, sgf29, taf10, taf9, sgf11 and sus1 (PubMed:19056896). The SAGA complex is composed of 4 modules, namely the HAT (histone acetyltransferase) module (gcn5, ada2, ngg1/ada3 and sgf29), the DUB (deubiquitinating) module (ubp8, sgf11, sgf73 and sus1), the core or TAF (TBP-associated factor) module (taf5, taf6, taf9, taf10 and taf12), and the Tra1 or SPT (Suppressor of Ty) module (tra1, hfi1/ada1, spt3, spt7, spt8 and spt20). The Tra1/SPT module binds activators, the core module recruits TBP (TATA-binding protein), the HAT module contains the histone H3 acetyltransferase gcn5, and the DUB module comprises the histone H2B deubiquitinase ubp8 (By similarity). Interacts with dimethylated and trimethylated 'Lys-4' of histone H3 (H3K4me2 and H3K4me3), with a preference for the trimethylated form (H3K4me3) (By similarity).</text>
</comment>
<comment type="subcellular location">
    <subcellularLocation>
        <location evidence="3">Cytoplasm</location>
    </subcellularLocation>
    <subcellularLocation>
        <location evidence="3">Nucleus</location>
    </subcellularLocation>
</comment>
<comment type="domain">
    <text evidence="2">The SGF29 C-terminal (also named tudor-like) domain mediates binding to methylated 'Lys-4' of histone H3 (H3K4me).</text>
</comment>
<comment type="similarity">
    <text evidence="2">Belongs to the SGF29 family.</text>
</comment>
<evidence type="ECO:0000250" key="1">
    <source>
        <dbReference type="UniProtKB" id="P25554"/>
    </source>
</evidence>
<evidence type="ECO:0000255" key="2">
    <source>
        <dbReference type="PROSITE-ProRule" id="PRU00851"/>
    </source>
</evidence>
<evidence type="ECO:0000269" key="3">
    <source>
    </source>
</evidence>
<evidence type="ECO:0000269" key="4">
    <source>
    </source>
</evidence>
<evidence type="ECO:0000269" key="5">
    <source>
    </source>
</evidence>
<evidence type="ECO:0000269" key="6">
    <source>
    </source>
</evidence>
<name>SGF29_SCHPO</name>
<gene>
    <name type="primary">sgf29</name>
    <name type="ORF">SPBC1921.07c</name>
    <name type="ORF">SPBC21D10.13</name>
</gene>
<feature type="chain" id="PRO_0000116868" description="SAGA complex subunit Sgf29">
    <location>
        <begin position="1"/>
        <end position="244"/>
    </location>
</feature>
<feature type="domain" description="SGF29 C-terminal" evidence="2">
    <location>
        <begin position="109"/>
        <end position="244"/>
    </location>
</feature>
<feature type="region of interest" description="Histone H3K4me3 N-terminus binding" evidence="1">
    <location>
        <begin position="155"/>
        <end position="157"/>
    </location>
</feature>
<feature type="region of interest" description="Histone H3K4me3 N-terminus binding" evidence="1">
    <location>
        <begin position="200"/>
        <end position="203"/>
    </location>
</feature>
<feature type="region of interest" description="Histone H3K4me3 binding" evidence="1">
    <location>
        <begin position="222"/>
        <end position="225"/>
    </location>
</feature>
<feature type="site" description="Histone H3K4me3 binding" evidence="1">
    <location>
        <position position="198"/>
    </location>
</feature>
<feature type="site" description="Histone H3K4me3 binding" evidence="1">
    <location>
        <position position="205"/>
    </location>
</feature>
<feature type="mutagenesis site" description="Impaired ability to bind methylated 'Lys-4' of histone H3 (H3K4me)." evidence="6">
    <original>TTFY</original>
    <variation>ATFV</variation>
    <location>
        <begin position="202"/>
        <end position="205"/>
    </location>
</feature>
<protein>
    <recommendedName>
        <fullName>SAGA complex subunit Sgf29</fullName>
    </recommendedName>
    <alternativeName>
        <fullName>SAGA-associated factor 29</fullName>
    </alternativeName>
</protein>
<organism>
    <name type="scientific">Schizosaccharomyces pombe (strain 972 / ATCC 24843)</name>
    <name type="common">Fission yeast</name>
    <dbReference type="NCBI Taxonomy" id="284812"/>
    <lineage>
        <taxon>Eukaryota</taxon>
        <taxon>Fungi</taxon>
        <taxon>Dikarya</taxon>
        <taxon>Ascomycota</taxon>
        <taxon>Taphrinomycotina</taxon>
        <taxon>Schizosaccharomycetes</taxon>
        <taxon>Schizosaccharomycetales</taxon>
        <taxon>Schizosaccharomycetaceae</taxon>
        <taxon>Schizosaccharomyces</taxon>
    </lineage>
</organism>
<sequence length="244" mass="27519">MVRPINAEEDVTSMWVKFHESLNPIRSSLIKQEECYKTVDGDDNPIEERIKACDAGIQTSEEQKKELEHTMQSLEMIINVLEKANEKPVITNSPLTRSRRNRGTSFTANTVTFTPGMSVAFKLPYTRHNEGGDWIQCIIIKVTGEGAKQRFEVQDPEPDDDGNAGQIYKTTANHLIQIPAKGTPLPPISPKTNVLARYPETTTFYRAEVIRTLPDGSCKLRFEGEEEVGKETVVERHLVLEYNG</sequence>
<keyword id="KW-0963">Cytoplasm</keyword>
<keyword id="KW-0539">Nucleus</keyword>
<keyword id="KW-1185">Reference proteome</keyword>
<keyword id="KW-0804">Transcription</keyword>
<keyword id="KW-0805">Transcription regulation</keyword>